<evidence type="ECO:0000255" key="1">
    <source>
        <dbReference type="HAMAP-Rule" id="MF_00731"/>
    </source>
</evidence>
<proteinExistence type="inferred from homology"/>
<name>MENE_STAA9</name>
<feature type="chain" id="PRO_1000083336" description="2-succinylbenzoate--CoA ligase">
    <location>
        <begin position="1"/>
        <end position="492"/>
    </location>
</feature>
<reference key="1">
    <citation type="submission" date="2007-05" db="EMBL/GenBank/DDBJ databases">
        <title>Complete sequence of chromosome of Staphylococcus aureus subsp. aureus JH9.</title>
        <authorList>
            <consortium name="US DOE Joint Genome Institute"/>
            <person name="Copeland A."/>
            <person name="Lucas S."/>
            <person name="Lapidus A."/>
            <person name="Barry K."/>
            <person name="Detter J.C."/>
            <person name="Glavina del Rio T."/>
            <person name="Hammon N."/>
            <person name="Israni S."/>
            <person name="Pitluck S."/>
            <person name="Chain P."/>
            <person name="Malfatti S."/>
            <person name="Shin M."/>
            <person name="Vergez L."/>
            <person name="Schmutz J."/>
            <person name="Larimer F."/>
            <person name="Land M."/>
            <person name="Hauser L."/>
            <person name="Kyrpides N."/>
            <person name="Kim E."/>
            <person name="Tomasz A."/>
            <person name="Richardson P."/>
        </authorList>
    </citation>
    <scope>NUCLEOTIDE SEQUENCE [LARGE SCALE GENOMIC DNA]</scope>
    <source>
        <strain>JH9</strain>
    </source>
</reference>
<comment type="function">
    <text evidence="1">Converts 2-succinylbenzoate (OSB) to 2-succinylbenzoyl-CoA (OSB-CoA).</text>
</comment>
<comment type="catalytic activity">
    <reaction evidence="1">
        <text>2-succinylbenzoate + ATP + CoA = 2-succinylbenzoyl-CoA + AMP + diphosphate</text>
        <dbReference type="Rhea" id="RHEA:17009"/>
        <dbReference type="ChEBI" id="CHEBI:18325"/>
        <dbReference type="ChEBI" id="CHEBI:30616"/>
        <dbReference type="ChEBI" id="CHEBI:33019"/>
        <dbReference type="ChEBI" id="CHEBI:57287"/>
        <dbReference type="ChEBI" id="CHEBI:57364"/>
        <dbReference type="ChEBI" id="CHEBI:456215"/>
        <dbReference type="EC" id="6.2.1.26"/>
    </reaction>
</comment>
<comment type="pathway">
    <text evidence="1">Quinol/quinone metabolism; 1,4-dihydroxy-2-naphthoate biosynthesis; 1,4-dihydroxy-2-naphthoate from chorismate: step 5/7.</text>
</comment>
<comment type="pathway">
    <text evidence="1">Quinol/quinone metabolism; menaquinone biosynthesis.</text>
</comment>
<comment type="similarity">
    <text evidence="1">Belongs to the ATP-dependent AMP-binding enzyme family. MenE subfamily.</text>
</comment>
<sequence>MDFWLYKQAQQNGHHIAITDGQESYTYQNLYCEASLLAKRLKAYQQSRVGLYIDNSIQSIILIHACWLANIEIAMINTRLTPNEMTNQMRSIDVQLIFCTLPLELRGFQIVSLDDIEFAGRDITTNGLLDNTMGIQYDTSNETVVPKESPSNILNTSFNLDDIASIMFTSGTTGPQKAVPQTFRNHYASAIGCKESLGFDRDTNWLSVLPIYHISGLSVLLRAVIEGFTVRIVDKFNAEQILTMIKNERITHISLVPQTLNWLMQQGLHEPYNLQKILLGGAKLSATMIETALQYNLPIYNSFGMTETCSQFLTATPEMLHARPDTVGMPSANVDVKIKNPNKEGHGELMIKGANVMNGYLYPTDLTGTFENGYFNTGDIAEIDHEGYVMIYDRRKDLIISGGENIYPYQIETVAKQFPGISDAVCVGHPDDTWGQVPKLYFVSESDISKAQLIAYLSKHLAKYKVPKHFEKVDTLPYTSTGKLQRNKLYRG</sequence>
<dbReference type="EC" id="6.2.1.26" evidence="1"/>
<dbReference type="EMBL" id="CP000703">
    <property type="protein sequence ID" value="ABQ49635.1"/>
    <property type="molecule type" value="Genomic_DNA"/>
</dbReference>
<dbReference type="RefSeq" id="WP_000348364.1">
    <property type="nucleotide sequence ID" value="NC_009487.1"/>
</dbReference>
<dbReference type="SMR" id="A5ITW2"/>
<dbReference type="KEGG" id="saj:SaurJH9_1847"/>
<dbReference type="HOGENOM" id="CLU_000022_59_0_9"/>
<dbReference type="UniPathway" id="UPA00079"/>
<dbReference type="UniPathway" id="UPA01057">
    <property type="reaction ID" value="UER00166"/>
</dbReference>
<dbReference type="GO" id="GO:0005524">
    <property type="term" value="F:ATP binding"/>
    <property type="evidence" value="ECO:0007669"/>
    <property type="project" value="UniProtKB-KW"/>
</dbReference>
<dbReference type="GO" id="GO:0008756">
    <property type="term" value="F:o-succinylbenzoate-CoA ligase activity"/>
    <property type="evidence" value="ECO:0007669"/>
    <property type="project" value="UniProtKB-UniRule"/>
</dbReference>
<dbReference type="GO" id="GO:0009234">
    <property type="term" value="P:menaquinone biosynthetic process"/>
    <property type="evidence" value="ECO:0007669"/>
    <property type="project" value="UniProtKB-UniRule"/>
</dbReference>
<dbReference type="CDD" id="cd05912">
    <property type="entry name" value="OSB_CoA_lg"/>
    <property type="match status" value="1"/>
</dbReference>
<dbReference type="Gene3D" id="3.30.300.30">
    <property type="match status" value="1"/>
</dbReference>
<dbReference type="Gene3D" id="3.40.50.12780">
    <property type="entry name" value="N-terminal domain of ligase-like"/>
    <property type="match status" value="1"/>
</dbReference>
<dbReference type="HAMAP" id="MF_00731">
    <property type="entry name" value="MenE"/>
    <property type="match status" value="1"/>
</dbReference>
<dbReference type="InterPro" id="IPR025110">
    <property type="entry name" value="AMP-bd_C"/>
</dbReference>
<dbReference type="InterPro" id="IPR045851">
    <property type="entry name" value="AMP-bd_C_sf"/>
</dbReference>
<dbReference type="InterPro" id="IPR000873">
    <property type="entry name" value="AMP-dep_synth/lig_dom"/>
</dbReference>
<dbReference type="InterPro" id="IPR042099">
    <property type="entry name" value="ANL_N_sf"/>
</dbReference>
<dbReference type="InterPro" id="IPR050237">
    <property type="entry name" value="ATP-dep_AMP-bd_enzyme"/>
</dbReference>
<dbReference type="InterPro" id="IPR010192">
    <property type="entry name" value="MenE"/>
</dbReference>
<dbReference type="NCBIfam" id="TIGR01923">
    <property type="entry name" value="menE"/>
    <property type="match status" value="1"/>
</dbReference>
<dbReference type="PANTHER" id="PTHR43767">
    <property type="entry name" value="LONG-CHAIN-FATTY-ACID--COA LIGASE"/>
    <property type="match status" value="1"/>
</dbReference>
<dbReference type="PANTHER" id="PTHR43767:SF1">
    <property type="entry name" value="NONRIBOSOMAL PEPTIDE SYNTHASE PES1 (EUROFUNG)-RELATED"/>
    <property type="match status" value="1"/>
</dbReference>
<dbReference type="Pfam" id="PF00501">
    <property type="entry name" value="AMP-binding"/>
    <property type="match status" value="1"/>
</dbReference>
<dbReference type="Pfam" id="PF13193">
    <property type="entry name" value="AMP-binding_C"/>
    <property type="match status" value="1"/>
</dbReference>
<dbReference type="SUPFAM" id="SSF56801">
    <property type="entry name" value="Acetyl-CoA synthetase-like"/>
    <property type="match status" value="1"/>
</dbReference>
<accession>A5ITW2</accession>
<gene>
    <name evidence="1" type="primary">menE</name>
    <name type="ordered locus">SaurJH9_1847</name>
</gene>
<keyword id="KW-0067">ATP-binding</keyword>
<keyword id="KW-0436">Ligase</keyword>
<keyword id="KW-0474">Menaquinone biosynthesis</keyword>
<keyword id="KW-0547">Nucleotide-binding</keyword>
<organism>
    <name type="scientific">Staphylococcus aureus (strain JH9)</name>
    <dbReference type="NCBI Taxonomy" id="359786"/>
    <lineage>
        <taxon>Bacteria</taxon>
        <taxon>Bacillati</taxon>
        <taxon>Bacillota</taxon>
        <taxon>Bacilli</taxon>
        <taxon>Bacillales</taxon>
        <taxon>Staphylococcaceae</taxon>
        <taxon>Staphylococcus</taxon>
    </lineage>
</organism>
<protein>
    <recommendedName>
        <fullName evidence="1">2-succinylbenzoate--CoA ligase</fullName>
        <ecNumber evidence="1">6.2.1.26</ecNumber>
    </recommendedName>
    <alternativeName>
        <fullName evidence="1">o-succinylbenzoyl-CoA synthetase</fullName>
        <shortName evidence="1">OSB-CoA synthetase</shortName>
    </alternativeName>
</protein>